<gene>
    <name type="primary">MYC</name>
</gene>
<organism>
    <name type="scientific">Bos taurus</name>
    <name type="common">Bovine</name>
    <dbReference type="NCBI Taxonomy" id="9913"/>
    <lineage>
        <taxon>Eukaryota</taxon>
        <taxon>Metazoa</taxon>
        <taxon>Chordata</taxon>
        <taxon>Craniata</taxon>
        <taxon>Vertebrata</taxon>
        <taxon>Euteleostomi</taxon>
        <taxon>Mammalia</taxon>
        <taxon>Eutheria</taxon>
        <taxon>Laurasiatheria</taxon>
        <taxon>Artiodactyla</taxon>
        <taxon>Ruminantia</taxon>
        <taxon>Pecora</taxon>
        <taxon>Bovidae</taxon>
        <taxon>Bovinae</taxon>
        <taxon>Bos</taxon>
    </lineage>
</organism>
<keyword id="KW-0007">Acetylation</keyword>
<keyword id="KW-0010">Activator</keyword>
<keyword id="KW-0158">Chromosome</keyword>
<keyword id="KW-0963">Cytoplasm</keyword>
<keyword id="KW-0238">DNA-binding</keyword>
<keyword id="KW-0325">Glycoprotein</keyword>
<keyword id="KW-1017">Isopeptide bond</keyword>
<keyword id="KW-0539">Nucleus</keyword>
<keyword id="KW-0597">Phosphoprotein</keyword>
<keyword id="KW-0656">Proto-oncogene</keyword>
<keyword id="KW-1185">Reference proteome</keyword>
<keyword id="KW-0804">Transcription</keyword>
<keyword id="KW-0805">Transcription regulation</keyword>
<keyword id="KW-0832">Ubl conjugation</keyword>
<name>MYC_BOVIN</name>
<proteinExistence type="evidence at transcript level"/>
<protein>
    <recommendedName>
        <fullName>Myc proto-oncogene protein</fullName>
    </recommendedName>
    <alternativeName>
        <fullName>Proto-oncogene c-Myc</fullName>
    </alternativeName>
    <alternativeName>
        <fullName>Transcription factor p64</fullName>
    </alternativeName>
</protein>
<evidence type="ECO:0000250" key="1"/>
<evidence type="ECO:0000250" key="2">
    <source>
        <dbReference type="UniProtKB" id="P01106"/>
    </source>
</evidence>
<evidence type="ECO:0000250" key="3">
    <source>
        <dbReference type="UniProtKB" id="P01108"/>
    </source>
</evidence>
<evidence type="ECO:0000255" key="4">
    <source>
        <dbReference type="PROSITE-ProRule" id="PRU00981"/>
    </source>
</evidence>
<evidence type="ECO:0000256" key="5">
    <source>
        <dbReference type="SAM" id="MobiDB-lite"/>
    </source>
</evidence>
<accession>Q2HJ27</accession>
<reference key="1">
    <citation type="submission" date="2006-02" db="EMBL/GenBank/DDBJ databases">
        <authorList>
            <consortium name="NIH - Mammalian Gene Collection (MGC) project"/>
        </authorList>
    </citation>
    <scope>NUCLEOTIDE SEQUENCE [LARGE SCALE MRNA]</scope>
    <source>
        <strain>Hereford</strain>
        <tissue>Uterus</tissue>
    </source>
</reference>
<comment type="function">
    <text evidence="2 3">Transcription factor that binds DNA in a non-specific manner, yet also specifically recognizes the core sequence 5'-CAC[GA]TG-3'. Activates the transcription of growth-related genes. Binds to the VEGFA promoter, promoting VEGFA production and subsequent sprouting angiogenesis. Regulator of somatic reprogramming, controls self-renewal of embryonic stem cells. Functions with TAF6L to activate target gene expression through RNA polymerase II pause release (By similarity). Positively regulates transcription of HNRNPA1, HNRNPA2 and PTBP1 which in turn regulate splicing of pyruvate kinase PKM by binding repressively to sequences flanking PKM exon 9, inhibiting exon 9 inclusion and resulting in exon 10 inclusion and production of the PKM M2 isoform (By similarity).</text>
</comment>
<comment type="subunit">
    <text evidence="2 3">Efficient DNA binding requires dimerization with another bHLH protein. Binds DNA as a heterodimer with MAX (By similarity). Interacts with TAF1C and SPAG9. Interacts with PARP10. Interacts with KDM5A and KDM5B. Interacts (when phosphorylated at Thr-58 and Ser-62) with FBXW7. Interacts with PIM2. Interacts with RIOX1. The heterodimer MYC:MAX interacts with ABI1; the interaction may enhance MYC:MAX transcriptional activity. Interacts with TRIM6 (By similarity). Interacts with NPM1; the binary complex is recruited to the promoter of MYC target genes and enhances their transcription (By similarity). Interacts with CIP2A; leading to the stabilization of MYC (By similarity). Interacts with NUP205 (By similarity). Interacts with HEATR1; the interaction is required for localization of MYC to the nucleolus (By similarity).</text>
</comment>
<comment type="subcellular location">
    <subcellularLocation>
        <location evidence="2">Nucleus</location>
        <location evidence="2">Nucleoplasm</location>
    </subcellularLocation>
    <subcellularLocation>
        <location evidence="2">Nucleus</location>
        <location evidence="2">Nucleolus</location>
    </subcellularLocation>
    <subcellularLocation>
        <location evidence="2">Nucleus</location>
    </subcellularLocation>
    <subcellularLocation>
        <location evidence="2">Cytoplasm</location>
    </subcellularLocation>
    <subcellularLocation>
        <location evidence="2">Chromosome</location>
    </subcellularLocation>
    <text evidence="2">Association with chromatin is reduced by hyperphosphorylation. Localization to the nucleolus is dependent on HEATR1.</text>
</comment>
<comment type="domain">
    <text evidence="2">The 9aaTAD motif is a transactivation domain present in a large number of yeast and animal transcription factors.</text>
</comment>
<comment type="PTM">
    <text evidence="2 3">Phosphorylated by PRKDC (By similarity). Phosphorylation at Ser-329 by PIM2 leads to the stabilization of MYC (By similarity). Phosphorylation at Ser-62 by CDK2 prevents Ras-induced senescence. Phosphorylated at Ser-62 by DYRK2; this primes the protein for subsequent phosphorylation by GSK3B at Thr-58. Phosphorylation at Thr-58 and Ser-62 by GSK3 is required for ubiquitination and degradation by the proteasome. Dephosphorylation at multiple sites by the PNUTS-PP1 complex promotes MYC stability by preventing ubiquitination by the SCF(FBXW7) complex. Dephosphorylation at Ser-62 by protein phosphatase 2A (PPP2CA) promotes its degradation; interaction with PPP2CA is enhanced by AMBRA1 (By similarity).</text>
</comment>
<comment type="PTM">
    <text evidence="2 3">Ubiquitinated by the SCF(FBXW7) complex when phosphorylated at Thr-58 and Ser-62, leading to its degradation by the proteasome. Ubiquitination is counteracted by USP28 in the nucleoplasm and USP36 in the nucleolus, both interacting with of FBXW7, leading to its deubiquitination and preventing degradation. Also polyubiquitinated by the DCX(TRPC4AP) complex. Ubiquitinated by UBR5 when not forming a heterodimer with another bHLH protein, leading to its degradation: UBR5 recognizes and binds a degron that is only available upon heterodimer dissociation (By similarity). Ubiquitinated by TRIM6 in a phosphorylation-independent manner.</text>
</comment>
<feature type="chain" id="PRO_0000244986" description="Myc proto-oncogene protein">
    <location>
        <begin position="1"/>
        <end position="439"/>
    </location>
</feature>
<feature type="domain" description="bHLH" evidence="4">
    <location>
        <begin position="354"/>
        <end position="406"/>
    </location>
</feature>
<feature type="region of interest" description="Disordered" evidence="5">
    <location>
        <begin position="201"/>
        <end position="359"/>
    </location>
</feature>
<feature type="region of interest" description="Leucine-zipper">
    <location>
        <begin position="413"/>
        <end position="434"/>
    </location>
</feature>
<feature type="short sequence motif" description="9aaTAD" evidence="2">
    <location>
        <begin position="100"/>
        <end position="108"/>
    </location>
</feature>
<feature type="short sequence motif" description="UBR5-degron" evidence="2">
    <location>
        <begin position="355"/>
        <end position="364"/>
    </location>
</feature>
<feature type="compositionally biased region" description="Low complexity" evidence="5">
    <location>
        <begin position="209"/>
        <end position="238"/>
    </location>
</feature>
<feature type="compositionally biased region" description="Acidic residues" evidence="5">
    <location>
        <begin position="251"/>
        <end position="263"/>
    </location>
</feature>
<feature type="compositionally biased region" description="Basic and acidic residues" evidence="5">
    <location>
        <begin position="266"/>
        <end position="278"/>
    </location>
</feature>
<feature type="compositionally biased region" description="Low complexity" evidence="5">
    <location>
        <begin position="279"/>
        <end position="288"/>
    </location>
</feature>
<feature type="compositionally biased region" description="Basic and acidic residues" evidence="5">
    <location>
        <begin position="315"/>
        <end position="331"/>
    </location>
</feature>
<feature type="compositionally biased region" description="Polar residues" evidence="5">
    <location>
        <begin position="335"/>
        <end position="347"/>
    </location>
</feature>
<feature type="modified residue" description="Phosphoserine" evidence="2">
    <location>
        <position position="6"/>
    </location>
</feature>
<feature type="modified residue" description="Phosphothreonine; by GSK3; alternate" evidence="2">
    <location>
        <position position="58"/>
    </location>
</feature>
<feature type="modified residue" description="Phosphoserine; by DYRK2, GSK3 and CDK2" evidence="2">
    <location>
        <position position="62"/>
    </location>
</feature>
<feature type="modified residue" description="Phosphoserine" evidence="2">
    <location>
        <position position="71"/>
    </location>
</feature>
<feature type="modified residue" description="Phosphoserine" evidence="2">
    <location>
        <position position="81"/>
    </location>
</feature>
<feature type="modified residue" description="N6-acetyllysine; by PCAF; alternate" evidence="2">
    <location>
        <position position="143"/>
    </location>
</feature>
<feature type="modified residue" description="N6-acetyllysine; alternate" evidence="2">
    <location>
        <position position="148"/>
    </location>
</feature>
<feature type="modified residue" description="Phosphoserine" evidence="2">
    <location>
        <position position="151"/>
    </location>
</feature>
<feature type="modified residue" description="N6-acetyllysine; by PCAF" evidence="2">
    <location>
        <position position="157"/>
    </location>
</feature>
<feature type="modified residue" description="Phosphoserine" evidence="2">
    <location>
        <position position="161"/>
    </location>
</feature>
<feature type="modified residue" description="N6-acetyllysine; by PCAF" evidence="2">
    <location>
        <position position="275"/>
    </location>
</feature>
<feature type="modified residue" description="Phosphoserine" evidence="2">
    <location>
        <position position="293"/>
    </location>
</feature>
<feature type="modified residue" description="Phosphoserine" evidence="2">
    <location>
        <position position="314"/>
    </location>
</feature>
<feature type="modified residue" description="Phosphothreonine" evidence="2">
    <location>
        <position position="315"/>
    </location>
</feature>
<feature type="modified residue" description="N6-acetyllysine; by PCAF" evidence="2">
    <location>
        <position position="317"/>
    </location>
</feature>
<feature type="modified residue" description="N6-acetyllysine; by PCAF" evidence="2">
    <location>
        <position position="323"/>
    </location>
</feature>
<feature type="modified residue" description="Phosphoserine; by PIM2; in vitro" evidence="3">
    <location>
        <position position="329"/>
    </location>
</feature>
<feature type="modified residue" description="Phosphoserine" evidence="2">
    <location>
        <position position="344"/>
    </location>
</feature>
<feature type="modified residue" description="Phosphoserine" evidence="2">
    <location>
        <position position="347"/>
    </location>
</feature>
<feature type="modified residue" description="Phosphoserine" evidence="2">
    <location>
        <position position="348"/>
    </location>
</feature>
<feature type="modified residue" description="N6-acetyllysine; by PCAF" evidence="2">
    <location>
        <position position="371"/>
    </location>
</feature>
<feature type="glycosylation site" description="O-linked (GlcNAc) threonine; alternate" evidence="1">
    <location>
        <position position="58"/>
    </location>
</feature>
<feature type="cross-link" description="Glycyl lysine isopeptide (Lys-Gly) (interchain with G-Cter in SUMO2)" evidence="2">
    <location>
        <position position="52"/>
    </location>
</feature>
<feature type="cross-link" description="Glycyl lysine isopeptide (Lys-Gly) (interchain with G-Cter in SUMO2); alternate" evidence="2">
    <location>
        <position position="143"/>
    </location>
</feature>
<feature type="cross-link" description="Glycyl lysine isopeptide (Lys-Gly) (interchain with G-Cter in SUMO2); alternate" evidence="2">
    <location>
        <position position="148"/>
    </location>
</feature>
<feature type="cross-link" description="Glycyl lysine isopeptide (Lys-Gly) (interchain with G-Cter in SUMO2)" evidence="2">
    <location>
        <position position="298"/>
    </location>
</feature>
<dbReference type="EMBL" id="BC113343">
    <property type="protein sequence ID" value="AAI13344.1"/>
    <property type="molecule type" value="mRNA"/>
</dbReference>
<dbReference type="RefSeq" id="NP_001039539.1">
    <property type="nucleotide sequence ID" value="NM_001046074.2"/>
</dbReference>
<dbReference type="RefSeq" id="XP_005215381.1">
    <property type="nucleotide sequence ID" value="XM_005215324.3"/>
</dbReference>
<dbReference type="RefSeq" id="XP_010810231.1">
    <property type="nucleotide sequence ID" value="XM_010811929.4"/>
</dbReference>
<dbReference type="SMR" id="Q2HJ27"/>
<dbReference type="FunCoup" id="Q2HJ27">
    <property type="interactions" value="1188"/>
</dbReference>
<dbReference type="STRING" id="9913.ENSBTAP00000011066"/>
<dbReference type="GlyCosmos" id="Q2HJ27">
    <property type="glycosylation" value="1 site, No reported glycans"/>
</dbReference>
<dbReference type="GlyGen" id="Q2HJ27">
    <property type="glycosylation" value="1 site"/>
</dbReference>
<dbReference type="PaxDb" id="9913-ENSBTAP00000011066"/>
<dbReference type="Ensembl" id="ENSBTAT00000011066.5">
    <property type="protein sequence ID" value="ENSBTAP00000011066.4"/>
    <property type="gene ID" value="ENSBTAG00000008409.6"/>
</dbReference>
<dbReference type="GeneID" id="511077"/>
<dbReference type="KEGG" id="bta:511077"/>
<dbReference type="CTD" id="4609"/>
<dbReference type="VEuPathDB" id="HostDB:ENSBTAG00000008409"/>
<dbReference type="VGNC" id="VGNC:31784">
    <property type="gene designation" value="MYC"/>
</dbReference>
<dbReference type="eggNOG" id="KOG2483">
    <property type="taxonomic scope" value="Eukaryota"/>
</dbReference>
<dbReference type="GeneTree" id="ENSGT00940000155285"/>
<dbReference type="HOGENOM" id="CLU_052560_0_0_1"/>
<dbReference type="InParanoid" id="Q2HJ27"/>
<dbReference type="OMA" id="FPYPLHD"/>
<dbReference type="OrthoDB" id="5964374at2759"/>
<dbReference type="TreeFam" id="TF106001"/>
<dbReference type="Reactome" id="R-BTA-5689880">
    <property type="pathway name" value="Ub-specific processing proteases"/>
</dbReference>
<dbReference type="Reactome" id="R-BTA-8866911">
    <property type="pathway name" value="TFAP2 (AP-2) family regulates transcription of cell cycle factors"/>
</dbReference>
<dbReference type="Proteomes" id="UP000009136">
    <property type="component" value="Chromosome 14"/>
</dbReference>
<dbReference type="Bgee" id="ENSBTAG00000008409">
    <property type="expression patterns" value="Expressed in ureter and 104 other cell types or tissues"/>
</dbReference>
<dbReference type="GO" id="GO:0000785">
    <property type="term" value="C:chromatin"/>
    <property type="evidence" value="ECO:0007669"/>
    <property type="project" value="Ensembl"/>
</dbReference>
<dbReference type="GO" id="GO:0005737">
    <property type="term" value="C:cytoplasm"/>
    <property type="evidence" value="ECO:0007669"/>
    <property type="project" value="UniProtKB-SubCell"/>
</dbReference>
<dbReference type="GO" id="GO:0071943">
    <property type="term" value="C:Myc-Max complex"/>
    <property type="evidence" value="ECO:0007669"/>
    <property type="project" value="Ensembl"/>
</dbReference>
<dbReference type="GO" id="GO:0016604">
    <property type="term" value="C:nuclear body"/>
    <property type="evidence" value="ECO:0000250"/>
    <property type="project" value="AgBase"/>
</dbReference>
<dbReference type="GO" id="GO:0005730">
    <property type="term" value="C:nucleolus"/>
    <property type="evidence" value="ECO:0000250"/>
    <property type="project" value="UniProtKB"/>
</dbReference>
<dbReference type="GO" id="GO:0005654">
    <property type="term" value="C:nucleoplasm"/>
    <property type="evidence" value="ECO:0000250"/>
    <property type="project" value="UniProtKB"/>
</dbReference>
<dbReference type="GO" id="GO:0005634">
    <property type="term" value="C:nucleus"/>
    <property type="evidence" value="ECO:0000250"/>
    <property type="project" value="UniProtKB"/>
</dbReference>
<dbReference type="GO" id="GO:0090571">
    <property type="term" value="C:RNA polymerase II transcription repressor complex"/>
    <property type="evidence" value="ECO:0007669"/>
    <property type="project" value="Ensembl"/>
</dbReference>
<dbReference type="GO" id="GO:0005819">
    <property type="term" value="C:spindle"/>
    <property type="evidence" value="ECO:0000250"/>
    <property type="project" value="AgBase"/>
</dbReference>
<dbReference type="GO" id="GO:0001046">
    <property type="term" value="F:core promoter sequence-specific DNA binding"/>
    <property type="evidence" value="ECO:0007669"/>
    <property type="project" value="Ensembl"/>
</dbReference>
<dbReference type="GO" id="GO:0003677">
    <property type="term" value="F:DNA binding"/>
    <property type="evidence" value="ECO:0000250"/>
    <property type="project" value="UniProtKB"/>
</dbReference>
<dbReference type="GO" id="GO:0001228">
    <property type="term" value="F:DNA-binding transcription activator activity, RNA polymerase II-specific"/>
    <property type="evidence" value="ECO:0007669"/>
    <property type="project" value="Ensembl"/>
</dbReference>
<dbReference type="GO" id="GO:0000981">
    <property type="term" value="F:DNA-binding transcription factor activity, RNA polymerase II-specific"/>
    <property type="evidence" value="ECO:0000250"/>
    <property type="project" value="UniProtKB"/>
</dbReference>
<dbReference type="GO" id="GO:0140297">
    <property type="term" value="F:DNA-binding transcription factor binding"/>
    <property type="evidence" value="ECO:0007669"/>
    <property type="project" value="Ensembl"/>
</dbReference>
<dbReference type="GO" id="GO:0001227">
    <property type="term" value="F:DNA-binding transcription repressor activity, RNA polymerase II-specific"/>
    <property type="evidence" value="ECO:0007669"/>
    <property type="project" value="Ensembl"/>
</dbReference>
<dbReference type="GO" id="GO:0070888">
    <property type="term" value="F:E-box binding"/>
    <property type="evidence" value="ECO:0000250"/>
    <property type="project" value="UniProtKB"/>
</dbReference>
<dbReference type="GO" id="GO:0042802">
    <property type="term" value="F:identical protein binding"/>
    <property type="evidence" value="ECO:0007669"/>
    <property type="project" value="Ensembl"/>
</dbReference>
<dbReference type="GO" id="GO:0046983">
    <property type="term" value="F:protein dimerization activity"/>
    <property type="evidence" value="ECO:0007669"/>
    <property type="project" value="InterPro"/>
</dbReference>
<dbReference type="GO" id="GO:0044877">
    <property type="term" value="F:protein-containing complex binding"/>
    <property type="evidence" value="ECO:0000250"/>
    <property type="project" value="UniProtKB"/>
</dbReference>
<dbReference type="GO" id="GO:0000978">
    <property type="term" value="F:RNA polymerase II cis-regulatory region sequence-specific DNA binding"/>
    <property type="evidence" value="ECO:0000318"/>
    <property type="project" value="GO_Central"/>
</dbReference>
<dbReference type="GO" id="GO:1905761">
    <property type="term" value="F:SCF ubiquitin ligase complex binding"/>
    <property type="evidence" value="ECO:0007669"/>
    <property type="project" value="Ensembl"/>
</dbReference>
<dbReference type="GO" id="GO:0001221">
    <property type="term" value="F:transcription coregulator binding"/>
    <property type="evidence" value="ECO:0007669"/>
    <property type="project" value="Ensembl"/>
</dbReference>
<dbReference type="GO" id="GO:0140537">
    <property type="term" value="F:transcription regulator activator activity"/>
    <property type="evidence" value="ECO:0007669"/>
    <property type="project" value="Ensembl"/>
</dbReference>
<dbReference type="GO" id="GO:0071456">
    <property type="term" value="P:cellular response to hypoxia"/>
    <property type="evidence" value="ECO:0007669"/>
    <property type="project" value="Ensembl"/>
</dbReference>
<dbReference type="GO" id="GO:0034644">
    <property type="term" value="P:cellular response to UV"/>
    <property type="evidence" value="ECO:0007669"/>
    <property type="project" value="Ensembl"/>
</dbReference>
<dbReference type="GO" id="GO:0071466">
    <property type="term" value="P:cellular response to xenobiotic stimulus"/>
    <property type="evidence" value="ECO:0007669"/>
    <property type="project" value="Ensembl"/>
</dbReference>
<dbReference type="GO" id="GO:0006338">
    <property type="term" value="P:chromatin remodeling"/>
    <property type="evidence" value="ECO:0000250"/>
    <property type="project" value="UniProtKB"/>
</dbReference>
<dbReference type="GO" id="GO:0051276">
    <property type="term" value="P:chromosome organization"/>
    <property type="evidence" value="ECO:0000250"/>
    <property type="project" value="UniProtKB"/>
</dbReference>
<dbReference type="GO" id="GO:0006974">
    <property type="term" value="P:DNA damage response"/>
    <property type="evidence" value="ECO:0000250"/>
    <property type="project" value="UniProtKB"/>
</dbReference>
<dbReference type="GO" id="GO:0070371">
    <property type="term" value="P:ERK1 and ERK2 cascade"/>
    <property type="evidence" value="ECO:0007669"/>
    <property type="project" value="Ensembl"/>
</dbReference>
<dbReference type="GO" id="GO:0000082">
    <property type="term" value="P:G1/S transition of mitotic cell cycle"/>
    <property type="evidence" value="ECO:0000250"/>
    <property type="project" value="UniProtKB"/>
</dbReference>
<dbReference type="GO" id="GO:0006879">
    <property type="term" value="P:intracellular iron ion homeostasis"/>
    <property type="evidence" value="ECO:0000250"/>
    <property type="project" value="UniProtKB"/>
</dbReference>
<dbReference type="GO" id="GO:0097193">
    <property type="term" value="P:intrinsic apoptotic signaling pathway"/>
    <property type="evidence" value="ECO:0000250"/>
    <property type="project" value="AgBase"/>
</dbReference>
<dbReference type="GO" id="GO:0000165">
    <property type="term" value="P:MAPK cascade"/>
    <property type="evidence" value="ECO:0000250"/>
    <property type="project" value="UniProtKB"/>
</dbReference>
<dbReference type="GO" id="GO:0043066">
    <property type="term" value="P:negative regulation of apoptotic process"/>
    <property type="evidence" value="ECO:0000250"/>
    <property type="project" value="UniProtKB"/>
</dbReference>
<dbReference type="GO" id="GO:0051782">
    <property type="term" value="P:negative regulation of cell division"/>
    <property type="evidence" value="ECO:0000250"/>
    <property type="project" value="UniProtKB"/>
</dbReference>
<dbReference type="GO" id="GO:0048147">
    <property type="term" value="P:negative regulation of fibroblast proliferation"/>
    <property type="evidence" value="ECO:0007669"/>
    <property type="project" value="Ensembl"/>
</dbReference>
<dbReference type="GO" id="GO:0044027">
    <property type="term" value="P:negative regulation of gene expression via chromosomal CpG island methylation"/>
    <property type="evidence" value="ECO:0007669"/>
    <property type="project" value="Ensembl"/>
</dbReference>
<dbReference type="GO" id="GO:0045656">
    <property type="term" value="P:negative regulation of monocyte differentiation"/>
    <property type="evidence" value="ECO:0000250"/>
    <property type="project" value="UniProtKB"/>
</dbReference>
<dbReference type="GO" id="GO:0032873">
    <property type="term" value="P:negative regulation of stress-activated MAPK cascade"/>
    <property type="evidence" value="ECO:0000250"/>
    <property type="project" value="UniProtKB"/>
</dbReference>
<dbReference type="GO" id="GO:0060633">
    <property type="term" value="P:negative regulation of transcription initiation by RNA polymerase II"/>
    <property type="evidence" value="ECO:0007669"/>
    <property type="project" value="Ensembl"/>
</dbReference>
<dbReference type="GO" id="GO:0008284">
    <property type="term" value="P:positive regulation of cell population proliferation"/>
    <property type="evidence" value="ECO:0000250"/>
    <property type="project" value="AgBase"/>
</dbReference>
<dbReference type="GO" id="GO:0045893">
    <property type="term" value="P:positive regulation of DNA-templated transcription"/>
    <property type="evidence" value="ECO:0000250"/>
    <property type="project" value="UniProtKB"/>
</dbReference>
<dbReference type="GO" id="GO:0050679">
    <property type="term" value="P:positive regulation of epithelial cell proliferation"/>
    <property type="evidence" value="ECO:0000250"/>
    <property type="project" value="UniProtKB"/>
</dbReference>
<dbReference type="GO" id="GO:0048146">
    <property type="term" value="P:positive regulation of fibroblast proliferation"/>
    <property type="evidence" value="ECO:0000250"/>
    <property type="project" value="UniProtKB"/>
</dbReference>
<dbReference type="GO" id="GO:0010628">
    <property type="term" value="P:positive regulation of gene expression"/>
    <property type="evidence" value="ECO:0007669"/>
    <property type="project" value="Ensembl"/>
</dbReference>
<dbReference type="GO" id="GO:1902255">
    <property type="term" value="P:positive regulation of intrinsic apoptotic signaling pathway by p53 class mediator"/>
    <property type="evidence" value="ECO:0007669"/>
    <property type="project" value="Ensembl"/>
</dbReference>
<dbReference type="GO" id="GO:1902895">
    <property type="term" value="P:positive regulation of miRNA transcription"/>
    <property type="evidence" value="ECO:0007669"/>
    <property type="project" value="Ensembl"/>
</dbReference>
<dbReference type="GO" id="GO:0045944">
    <property type="term" value="P:positive regulation of transcription by RNA polymerase II"/>
    <property type="evidence" value="ECO:0000250"/>
    <property type="project" value="UniProtKB"/>
</dbReference>
<dbReference type="GO" id="GO:0032986">
    <property type="term" value="P:protein-DNA complex disassembly"/>
    <property type="evidence" value="ECO:0007669"/>
    <property type="project" value="Ensembl"/>
</dbReference>
<dbReference type="GO" id="GO:0042981">
    <property type="term" value="P:regulation of apoptotic process"/>
    <property type="evidence" value="ECO:0000250"/>
    <property type="project" value="AgBase"/>
</dbReference>
<dbReference type="GO" id="GO:0010564">
    <property type="term" value="P:regulation of cell cycle process"/>
    <property type="evidence" value="ECO:0007669"/>
    <property type="project" value="Ensembl"/>
</dbReference>
<dbReference type="GO" id="GO:0006355">
    <property type="term" value="P:regulation of DNA-templated transcription"/>
    <property type="evidence" value="ECO:0000250"/>
    <property type="project" value="AgBase"/>
</dbReference>
<dbReference type="GO" id="GO:1904672">
    <property type="term" value="P:regulation of somatic stem cell population maintenance"/>
    <property type="evidence" value="ECO:0000250"/>
    <property type="project" value="UniProtKB"/>
</dbReference>
<dbReference type="GO" id="GO:0032204">
    <property type="term" value="P:regulation of telomere maintenance"/>
    <property type="evidence" value="ECO:0000250"/>
    <property type="project" value="UniProtKB"/>
</dbReference>
<dbReference type="GO" id="GO:0006357">
    <property type="term" value="P:regulation of transcription by RNA polymerase II"/>
    <property type="evidence" value="ECO:0000318"/>
    <property type="project" value="GO_Central"/>
</dbReference>
<dbReference type="GO" id="GO:0009314">
    <property type="term" value="P:response to radiation"/>
    <property type="evidence" value="ECO:0000250"/>
    <property type="project" value="AgBase"/>
</dbReference>
<dbReference type="GO" id="GO:0009410">
    <property type="term" value="P:response to xenobiotic stimulus"/>
    <property type="evidence" value="ECO:0000250"/>
    <property type="project" value="UniProtKB"/>
</dbReference>
<dbReference type="GO" id="GO:0016072">
    <property type="term" value="P:rRNA metabolic process"/>
    <property type="evidence" value="ECO:0000250"/>
    <property type="project" value="UniProtKB"/>
</dbReference>
<dbReference type="CDD" id="cd11458">
    <property type="entry name" value="bHLHzip_c-Myc"/>
    <property type="match status" value="1"/>
</dbReference>
<dbReference type="FunFam" id="4.10.280.10:FF:000019">
    <property type="entry name" value="Myc proto-oncogene protein"/>
    <property type="match status" value="1"/>
</dbReference>
<dbReference type="Gene3D" id="4.10.280.10">
    <property type="entry name" value="Helix-loop-helix DNA-binding domain"/>
    <property type="match status" value="1"/>
</dbReference>
<dbReference type="InterPro" id="IPR011598">
    <property type="entry name" value="bHLH_dom"/>
</dbReference>
<dbReference type="InterPro" id="IPR036638">
    <property type="entry name" value="HLH_DNA-bd_sf"/>
</dbReference>
<dbReference type="InterPro" id="IPR003327">
    <property type="entry name" value="Myc-LZ"/>
</dbReference>
<dbReference type="InterPro" id="IPR050433">
    <property type="entry name" value="Myc_transcription_factors"/>
</dbReference>
<dbReference type="InterPro" id="IPR002418">
    <property type="entry name" value="Tscrpt_reg_Myc"/>
</dbReference>
<dbReference type="InterPro" id="IPR012682">
    <property type="entry name" value="Tscrpt_reg_Myc_N"/>
</dbReference>
<dbReference type="PANTHER" id="PTHR45851">
    <property type="entry name" value="MYC PROTO-ONCOGENE"/>
    <property type="match status" value="1"/>
</dbReference>
<dbReference type="Pfam" id="PF00010">
    <property type="entry name" value="HLH"/>
    <property type="match status" value="1"/>
</dbReference>
<dbReference type="Pfam" id="PF02344">
    <property type="entry name" value="Myc-LZ"/>
    <property type="match status" value="1"/>
</dbReference>
<dbReference type="Pfam" id="PF01056">
    <property type="entry name" value="Myc_N"/>
    <property type="match status" value="1"/>
</dbReference>
<dbReference type="PIRSF" id="PIRSF001705">
    <property type="entry name" value="Myc_protein"/>
    <property type="match status" value="1"/>
</dbReference>
<dbReference type="PRINTS" id="PR00044">
    <property type="entry name" value="LEUZIPPRMYC"/>
</dbReference>
<dbReference type="SMART" id="SM00353">
    <property type="entry name" value="HLH"/>
    <property type="match status" value="1"/>
</dbReference>
<dbReference type="SUPFAM" id="SSF47459">
    <property type="entry name" value="HLH, helix-loop-helix DNA-binding domain"/>
    <property type="match status" value="1"/>
</dbReference>
<dbReference type="PROSITE" id="PS50888">
    <property type="entry name" value="BHLH"/>
    <property type="match status" value="1"/>
</dbReference>
<sequence>MPLNVSFANKNYDLDYDSVQPYFYCDEEENFYHQQQQSELQPPAPSEDIWKKFELLPTPPLSPSRRSGLCSPSYVAVASFSPRGDDDGGGGSFSSADQLEMVTELLGGDMVNQSFICDPDDETLIKNIIIQDCMWSGFSAAAKLVSEKLASYQAARKDGGSPSPARGHGGCSTSSLYLQDLSAAASECIDPSVVFPYPLNDSSSPKPCASPDSTAFSPSSDSLLSSAESSPRASPEPLALHEETPPTTSSDSEEEQEDEEEIDVVSVEKRQPPAKRSESGSPSAGSHSKPPHSPLVLKRCHVSTHQHNYAAPPSTRKDYPAAKRAKLDSGRVLKQISNNRKCASPRSSDTEENDKRRTHNVLERQRRNELKRSFFALRDQIPELENNEKAPKVVILKKATAYILSVQAEQQKLKSEIDVLQKRREQLKLKLEQIRNSCA</sequence>